<gene>
    <name evidence="1" type="primary">cyaY</name>
    <name type="ordered locus">CGSHiGG_07100</name>
</gene>
<dbReference type="EMBL" id="CP000672">
    <property type="protein sequence ID" value="ABR00287.1"/>
    <property type="molecule type" value="Genomic_DNA"/>
</dbReference>
<dbReference type="SMR" id="A5UHN1"/>
<dbReference type="KEGG" id="hiq:CGSHiGG_07100"/>
<dbReference type="HOGENOM" id="CLU_080880_3_0_6"/>
<dbReference type="Proteomes" id="UP000001990">
    <property type="component" value="Chromosome"/>
</dbReference>
<dbReference type="GO" id="GO:0005829">
    <property type="term" value="C:cytosol"/>
    <property type="evidence" value="ECO:0007669"/>
    <property type="project" value="TreeGrafter"/>
</dbReference>
<dbReference type="GO" id="GO:0008199">
    <property type="term" value="F:ferric iron binding"/>
    <property type="evidence" value="ECO:0007669"/>
    <property type="project" value="InterPro"/>
</dbReference>
<dbReference type="GO" id="GO:0008198">
    <property type="term" value="F:ferrous iron binding"/>
    <property type="evidence" value="ECO:0007669"/>
    <property type="project" value="TreeGrafter"/>
</dbReference>
<dbReference type="GO" id="GO:0016226">
    <property type="term" value="P:iron-sulfur cluster assembly"/>
    <property type="evidence" value="ECO:0007669"/>
    <property type="project" value="UniProtKB-UniRule"/>
</dbReference>
<dbReference type="CDD" id="cd00503">
    <property type="entry name" value="Frataxin"/>
    <property type="match status" value="1"/>
</dbReference>
<dbReference type="FunFam" id="3.30.920.10:FF:000009">
    <property type="entry name" value="Iron-sulfur cluster assembly protein CyaY"/>
    <property type="match status" value="1"/>
</dbReference>
<dbReference type="Gene3D" id="3.30.920.10">
    <property type="entry name" value="Frataxin/CyaY"/>
    <property type="match status" value="1"/>
</dbReference>
<dbReference type="HAMAP" id="MF_00142">
    <property type="entry name" value="CyaY"/>
    <property type="match status" value="1"/>
</dbReference>
<dbReference type="InterPro" id="IPR047584">
    <property type="entry name" value="CyaY"/>
</dbReference>
<dbReference type="InterPro" id="IPR002908">
    <property type="entry name" value="Frataxin/CyaY"/>
</dbReference>
<dbReference type="InterPro" id="IPR036524">
    <property type="entry name" value="Frataxin/CyaY_sf"/>
</dbReference>
<dbReference type="InterPro" id="IPR020895">
    <property type="entry name" value="Frataxin_CS"/>
</dbReference>
<dbReference type="NCBIfam" id="TIGR03421">
    <property type="entry name" value="FeS_CyaY"/>
    <property type="match status" value="1"/>
</dbReference>
<dbReference type="PANTHER" id="PTHR16821">
    <property type="entry name" value="FRATAXIN"/>
    <property type="match status" value="1"/>
</dbReference>
<dbReference type="PANTHER" id="PTHR16821:SF2">
    <property type="entry name" value="FRATAXIN, MITOCHONDRIAL"/>
    <property type="match status" value="1"/>
</dbReference>
<dbReference type="Pfam" id="PF01491">
    <property type="entry name" value="Frataxin_Cyay"/>
    <property type="match status" value="1"/>
</dbReference>
<dbReference type="SMART" id="SM01219">
    <property type="entry name" value="Frataxin_Cyay"/>
    <property type="match status" value="1"/>
</dbReference>
<dbReference type="SUPFAM" id="SSF55387">
    <property type="entry name" value="Frataxin/Nqo15-like"/>
    <property type="match status" value="1"/>
</dbReference>
<dbReference type="PROSITE" id="PS01344">
    <property type="entry name" value="FRATAXIN_1"/>
    <property type="match status" value="1"/>
</dbReference>
<dbReference type="PROSITE" id="PS50810">
    <property type="entry name" value="FRATAXIN_2"/>
    <property type="match status" value="1"/>
</dbReference>
<accession>A5UHN1</accession>
<name>CYAY_HAEIG</name>
<keyword id="KW-0408">Iron</keyword>
<keyword id="KW-0479">Metal-binding</keyword>
<proteinExistence type="inferred from homology"/>
<reference key="1">
    <citation type="journal article" date="2007" name="Genome Biol.">
        <title>Characterization and modeling of the Haemophilus influenzae core and supragenomes based on the complete genomic sequences of Rd and 12 clinical nontypeable strains.</title>
        <authorList>
            <person name="Hogg J.S."/>
            <person name="Hu F.Z."/>
            <person name="Janto B."/>
            <person name="Boissy R."/>
            <person name="Hayes J."/>
            <person name="Keefe R."/>
            <person name="Post J.C."/>
            <person name="Ehrlich G.D."/>
        </authorList>
    </citation>
    <scope>NUCLEOTIDE SEQUENCE [LARGE SCALE GENOMIC DNA]</scope>
    <source>
        <strain>PittGG</strain>
    </source>
</reference>
<organism>
    <name type="scientific">Haemophilus influenzae (strain PittGG)</name>
    <dbReference type="NCBI Taxonomy" id="374931"/>
    <lineage>
        <taxon>Bacteria</taxon>
        <taxon>Pseudomonadati</taxon>
        <taxon>Pseudomonadota</taxon>
        <taxon>Gammaproteobacteria</taxon>
        <taxon>Pasteurellales</taxon>
        <taxon>Pasteurellaceae</taxon>
        <taxon>Haemophilus</taxon>
    </lineage>
</organism>
<feature type="chain" id="PRO_1000010932" description="Iron-sulfur cluster assembly protein CyaY">
    <location>
        <begin position="1"/>
        <end position="101"/>
    </location>
</feature>
<sequence length="101" mass="11653">MNIAEFHQNIEQVWQKIEEELENQGADVDCETQGSVFTITFDNRTQIVINKQEPLLELWIASKLGGFHFAFKNGDWVSNDGQRFWDCFVEACAAHGENVQF</sequence>
<comment type="function">
    <text evidence="1">Involved in iron-sulfur (Fe-S) cluster assembly. May act as a regulator of Fe-S biogenesis.</text>
</comment>
<comment type="similarity">
    <text evidence="1">Belongs to the frataxin family.</text>
</comment>
<evidence type="ECO:0000255" key="1">
    <source>
        <dbReference type="HAMAP-Rule" id="MF_00142"/>
    </source>
</evidence>
<protein>
    <recommendedName>
        <fullName evidence="1">Iron-sulfur cluster assembly protein CyaY</fullName>
    </recommendedName>
</protein>